<feature type="chain" id="PRO_0000460340" description="Gabija anti-defense 2">
    <location>
        <begin position="1"/>
        <end position="400"/>
    </location>
</feature>
<feature type="mutagenesis site" description="Complete loss of inhibition of Gabija host defense." evidence="1">
    <original>D</original>
    <variation>A</variation>
    <location>
        <position position="45"/>
    </location>
</feature>
<feature type="mutagenesis site" description="Complete loss of inhibition of Gabija host defense." evidence="1">
    <original>D</original>
    <variation>A</variation>
    <location>
        <position position="47"/>
    </location>
</feature>
<feature type="mutagenesis site" description="Complete loss of inhibition of Gabija host defense." evidence="1">
    <original>D</original>
    <variation>A</variation>
    <location>
        <position position="106"/>
    </location>
</feature>
<feature type="mutagenesis site" description="Complete loss of inhibition of Gabija host defense." evidence="1">
    <original>R</original>
    <variation>A</variation>
    <location>
        <position position="151"/>
    </location>
</feature>
<sequence length="400" mass="46528">MSYQFEKNKLYAYLGEELVEALKRNEAIIAGGAITSLFNNKEINDVDIYFRSDKKACSFLEECWNSNVYVTSHTKKATLFIKKRLKLQMIHFKFFSDAESIFNTFDFTVCMGAFDFKTEAFTLHEDFLKHNSQRILKFNSQTAFPIVSLLRVQKYTDKEYTISKPEFIRIVLTCMDLTINTYEELKDQMGGMYGINYDKLFEDEKDEDFNLREAVDKIADMVLDEDYFKEPVNLEFNDLDDLLNDINKSPVMTLKINDDQYRIGLDGFLKESVSAPCTEIKLDTKDFFDKTNFYKFVRKQNGKLTSFYDKNFEYVIGEEAKAEGVIDSWSNSGKLFFNEKAAIEQSTYYGKEDGVLIEVKIKEKDFVDADNGKVEATACQVIREVSKDEWKEYISANNSK</sequence>
<proteinExistence type="evidence at protein level"/>
<dbReference type="EMBL" id="OQ921347">
    <property type="protein sequence ID" value="WIT28108.1"/>
    <property type="molecule type" value="Genomic_DNA"/>
</dbReference>
<dbReference type="SMR" id="A0A9Y1YY28"/>
<dbReference type="Proteomes" id="UP001237278">
    <property type="component" value="Segment"/>
</dbReference>
<dbReference type="GO" id="GO:0016779">
    <property type="term" value="F:nucleotidyltransferase activity"/>
    <property type="evidence" value="ECO:0007669"/>
    <property type="project" value="UniProtKB-KW"/>
</dbReference>
<dbReference type="GO" id="GO:0052170">
    <property type="term" value="P:symbiont-mediated suppression of host innate immune response"/>
    <property type="evidence" value="ECO:0007669"/>
    <property type="project" value="UniProtKB-KW"/>
</dbReference>
<keyword id="KW-0945">Host-virus interaction</keyword>
<keyword id="KW-1090">Inhibition of host innate immune response by virus</keyword>
<keyword id="KW-0548">Nucleotidyltransferase</keyword>
<keyword id="KW-1185">Reference proteome</keyword>
<keyword id="KW-0808">Transferase</keyword>
<keyword id="KW-0899">Viral immunoevasion</keyword>
<accession>A0A9Y1YY28</accession>
<gene>
    <name evidence="2" type="primary">gad2</name>
    <name type="ORF">159</name>
</gene>
<organism>
    <name type="scientific">Bacillus phage SPbetaL7</name>
    <dbReference type="NCBI Taxonomy" id="3053441"/>
    <lineage>
        <taxon>Viruses</taxon>
        <taxon>Duplodnaviria</taxon>
        <taxon>Heunggongvirae</taxon>
        <taxon>Uroviricota</taxon>
        <taxon>Caudoviricetes</taxon>
        <taxon>Spbetavirus</taxon>
    </lineage>
</organism>
<evidence type="ECO:0000269" key="1">
    <source>
    </source>
</evidence>
<evidence type="ECO:0000303" key="2">
    <source>
    </source>
</evidence>
<reference key="1">
    <citation type="journal article" date="2024" name="Nature">
        <title>Phages overcome bacterial immunity via diverse anti-defence proteins.</title>
        <authorList>
            <person name="Yirmiya E."/>
            <person name="Leavitt A."/>
            <person name="Lu A."/>
            <person name="Ragucci A.E."/>
            <person name="Avraham C."/>
            <person name="Osterman I."/>
            <person name="Garb J."/>
            <person name="Antine S.P."/>
            <person name="Mooney S.E."/>
            <person name="Hobbs S.J."/>
            <person name="Kranzusch P.J."/>
            <person name="Amitai G."/>
            <person name="Sorek R."/>
        </authorList>
    </citation>
    <scope>NUCLEOTIDE SEQUENCE [LARGE SCALE GENOMIC DNA]</scope>
    <scope>FUNCTION</scope>
    <scope>DISRUPTION PHENOTYPE</scope>
    <scope>MUTAGENESIS OF ASP-45; ASP-47; ASP-106 AND ARG-151</scope>
</reference>
<protein>
    <recommendedName>
        <fullName evidence="2">Gabija anti-defense 2</fullName>
        <shortName evidence="2">Gad2</shortName>
    </recommendedName>
</protein>
<name>GAD2_BPSP7</name>
<comment type="function">
    <text evidence="1">Counteracts the host Gabija antiviral defense system (PubMed:37992756). Probable nucleotidyltransferase (PubMed:37992756).</text>
</comment>
<comment type="disruption phenotype">
    <text evidence="1">Knockout of this gene prevents the phage to overcome the host Gabija defense.</text>
</comment>